<organism>
    <name type="scientific">Pongo abelii</name>
    <name type="common">Sumatran orangutan</name>
    <name type="synonym">Pongo pygmaeus abelii</name>
    <dbReference type="NCBI Taxonomy" id="9601"/>
    <lineage>
        <taxon>Eukaryota</taxon>
        <taxon>Metazoa</taxon>
        <taxon>Chordata</taxon>
        <taxon>Craniata</taxon>
        <taxon>Vertebrata</taxon>
        <taxon>Euteleostomi</taxon>
        <taxon>Mammalia</taxon>
        <taxon>Eutheria</taxon>
        <taxon>Euarchontoglires</taxon>
        <taxon>Primates</taxon>
        <taxon>Haplorrhini</taxon>
        <taxon>Catarrhini</taxon>
        <taxon>Hominidae</taxon>
        <taxon>Pongo</taxon>
    </lineage>
</organism>
<name>UBP4_PONAB</name>
<keyword id="KW-0963">Cytoplasm</keyword>
<keyword id="KW-0378">Hydrolase</keyword>
<keyword id="KW-0479">Metal-binding</keyword>
<keyword id="KW-0539">Nucleus</keyword>
<keyword id="KW-0597">Phosphoprotein</keyword>
<keyword id="KW-0645">Protease</keyword>
<keyword id="KW-1185">Reference proteome</keyword>
<keyword id="KW-0677">Repeat</keyword>
<keyword id="KW-0788">Thiol protease</keyword>
<keyword id="KW-0832">Ubl conjugation</keyword>
<keyword id="KW-0833">Ubl conjugation pathway</keyword>
<keyword id="KW-0862">Zinc</keyword>
<comment type="function">
    <text evidence="3">Deubiquitinating enzyme that removes conjugated ubiquitin from target proteins. Deubiquitinates PDPK1. Deubiquitinates TRIM21. Deubiquitinates receptor ADORA2A which increases the amount of functional receptor at the cell surface. Deubiquitinates HAS2. Deubiquitinates RHEB in response to EGF signaling, promoting mTORC1 signaling. May regulate mRNA splicing through deubiquitination of the U4 spliceosomal protein PRPF3. This may prevent its recognition by the U5 component PRPF8 thereby destabilizing interactions within the U4/U6.U5 snRNP. May also play a role in the regulation of quality control in the ER.</text>
</comment>
<comment type="catalytic activity">
    <reaction evidence="3">
        <text>Thiol-dependent hydrolysis of ester, thioester, amide, peptide and isopeptide bonds formed by the C-terminal Gly of ubiquitin (a 76-residue protein attached to proteins as an intracellular targeting signal).</text>
        <dbReference type="EC" id="3.4.19.12"/>
    </reaction>
</comment>
<comment type="activity regulation">
    <text evidence="3">The completion of the deubiquitinase reaction is mediated by the DUSP and ubiquitin-like 1 domains which promotes the release of ubiquitin from the catalytic site enabling subsequent reactions to occur.</text>
</comment>
<comment type="subunit">
    <text evidence="2 3">Interacts with RB1 (both dephosphorylated and hypophosphorylated forms) (By similarity). Interacts with RBL1 and RBL2 (By similarity). Interacts with ADORA2A (via cytoplasmic C-terminus); the interaction is direct. Interacts with SART3; recruits USP4 to its substrate PRPF3 (By similarity).</text>
</comment>
<comment type="subcellular location">
    <subcellularLocation>
        <location evidence="2 3">Cytoplasm</location>
    </subcellularLocation>
    <subcellularLocation>
        <location evidence="2 3">Nucleus</location>
    </subcellularLocation>
    <text evidence="2 3">Shuttles between the nucleus and cytoplasm. Exported to the cytoplasm in a CRM1-dependent manner and recycled back to the nucleus via the importin alpha/beta heterodimeric import receptor. The relative amounts found in the nucleus and cytoplasm vary according to the cell type.</text>
</comment>
<comment type="domain">
    <text evidence="3">The DUSP and ubiquitin-like 1 domains promote ubiquitin release and thus enhance USB4 catalytic activity. However, these domains do not bind ubiquitin.</text>
</comment>
<comment type="PTM">
    <text evidence="3">Phosphorylated at Ser-445 by PKB/AKT1 in response to EGF stimulus, promoting its ability deubiquitinate RHEB.</text>
</comment>
<comment type="PTM">
    <text evidence="3">Monoubiquitinated by TRIM21. Ubiquitination does not lead to its proteasomal degradation. Autodeubiquitinated.</text>
</comment>
<comment type="similarity">
    <text evidence="8">Belongs to the peptidase C19 family. USP4 subfamily.</text>
</comment>
<reference key="1">
    <citation type="submission" date="2004-11" db="EMBL/GenBank/DDBJ databases">
        <authorList>
            <consortium name="The German cDNA consortium"/>
        </authorList>
    </citation>
    <scope>NUCLEOTIDE SEQUENCE [LARGE SCALE MRNA]</scope>
    <source>
        <tissue>Brain cortex</tissue>
    </source>
</reference>
<proteinExistence type="evidence at transcript level"/>
<feature type="chain" id="PRO_0000301667" description="Ubiquitin carboxyl-terminal hydrolase 4">
    <location>
        <begin position="1"/>
        <end position="963"/>
    </location>
</feature>
<feature type="domain" description="DUSP" evidence="5">
    <location>
        <begin position="11"/>
        <end position="122"/>
    </location>
</feature>
<feature type="domain" description="Ubiquitin-like 1" evidence="4">
    <location>
        <begin position="142"/>
        <end position="226"/>
    </location>
</feature>
<feature type="domain" description="USP" evidence="6">
    <location>
        <begin position="302"/>
        <end position="923"/>
    </location>
</feature>
<feature type="domain" description="Ubiquitin-like 2" evidence="4">
    <location>
        <begin position="483"/>
        <end position="571"/>
    </location>
</feature>
<feature type="region of interest" description="Necessary for interaction with SART3" evidence="3">
    <location>
        <begin position="27"/>
        <end position="216"/>
    </location>
</feature>
<feature type="region of interest" description="Disordered" evidence="7">
    <location>
        <begin position="220"/>
        <end position="255"/>
    </location>
</feature>
<feature type="region of interest" description="Required for USP4 activation by providing conformational flexibility between the DUSP and catalytic domains" evidence="3">
    <location>
        <begin position="229"/>
        <end position="295"/>
    </location>
</feature>
<feature type="region of interest" description="Regulates ubiquitin dissociation" evidence="3">
    <location>
        <begin position="384"/>
        <end position="386"/>
    </location>
</feature>
<feature type="region of interest" description="Necessary for interaction with RBL2" evidence="2">
    <location>
        <begin position="405"/>
        <end position="407"/>
    </location>
</feature>
<feature type="region of interest" description="Necessary for interaction with RB1 and RBL2" evidence="2">
    <location>
        <begin position="459"/>
        <end position="463"/>
    </location>
</feature>
<feature type="region of interest" description="Interacts with DUSP and ubiquitin-like 1 domains and is required for USP4 activation" evidence="3">
    <location>
        <begin position="485"/>
        <end position="775"/>
    </location>
</feature>
<feature type="region of interest" description="Disordered" evidence="7">
    <location>
        <begin position="637"/>
        <end position="698"/>
    </location>
</feature>
<feature type="region of interest" description="Disordered" evidence="7">
    <location>
        <begin position="928"/>
        <end position="963"/>
    </location>
</feature>
<feature type="short sequence motif" description="Nuclear export signal" evidence="2">
    <location>
        <begin position="133"/>
        <end position="141"/>
    </location>
</feature>
<feature type="short sequence motif" description="Nuclear localization signal" evidence="2">
    <location>
        <begin position="767"/>
        <end position="772"/>
    </location>
</feature>
<feature type="compositionally biased region" description="Polar residues" evidence="7">
    <location>
        <begin position="225"/>
        <end position="243"/>
    </location>
</feature>
<feature type="compositionally biased region" description="Low complexity" evidence="7">
    <location>
        <begin position="244"/>
        <end position="255"/>
    </location>
</feature>
<feature type="compositionally biased region" description="Acidic residues" evidence="7">
    <location>
        <begin position="657"/>
        <end position="666"/>
    </location>
</feature>
<feature type="compositionally biased region" description="Low complexity" evidence="7">
    <location>
        <begin position="932"/>
        <end position="948"/>
    </location>
</feature>
<feature type="compositionally biased region" description="Acidic residues" evidence="7">
    <location>
        <begin position="953"/>
        <end position="963"/>
    </location>
</feature>
<feature type="active site" description="Nucleophile" evidence="6">
    <location>
        <position position="311"/>
    </location>
</feature>
<feature type="active site" description="Proton acceptor" evidence="6">
    <location>
        <position position="881"/>
    </location>
</feature>
<feature type="binding site" evidence="3">
    <location>
        <position position="461"/>
    </location>
    <ligand>
        <name>Zn(2+)</name>
        <dbReference type="ChEBI" id="CHEBI:29105"/>
    </ligand>
</feature>
<feature type="binding site" evidence="3">
    <location>
        <position position="464"/>
    </location>
    <ligand>
        <name>Zn(2+)</name>
        <dbReference type="ChEBI" id="CHEBI:29105"/>
    </ligand>
</feature>
<feature type="binding site" evidence="3">
    <location>
        <position position="799"/>
    </location>
    <ligand>
        <name>Zn(2+)</name>
        <dbReference type="ChEBI" id="CHEBI:29105"/>
    </ligand>
</feature>
<feature type="binding site" evidence="3">
    <location>
        <position position="802"/>
    </location>
    <ligand>
        <name>Zn(2+)</name>
        <dbReference type="ChEBI" id="CHEBI:29105"/>
    </ligand>
</feature>
<feature type="modified residue" description="Phosphoserine" evidence="3">
    <location>
        <position position="445"/>
    </location>
</feature>
<feature type="modified residue" description="Phosphoserine" evidence="1">
    <location>
        <position position="655"/>
    </location>
</feature>
<feature type="modified residue" description="Phosphoserine" evidence="2">
    <location>
        <position position="675"/>
    </location>
</feature>
<feature type="modified residue" description="Phosphoserine" evidence="2">
    <location>
        <position position="680"/>
    </location>
</feature>
<accession>Q5RCD3</accession>
<protein>
    <recommendedName>
        <fullName>Ubiquitin carboxyl-terminal hydrolase 4</fullName>
        <ecNumber evidence="3">3.4.19.12</ecNumber>
    </recommendedName>
    <alternativeName>
        <fullName>Deubiquitinating enzyme 4</fullName>
    </alternativeName>
    <alternativeName>
        <fullName>Ubiquitin thioesterase 4</fullName>
    </alternativeName>
    <alternativeName>
        <fullName>Ubiquitin-specific-processing protease 4</fullName>
    </alternativeName>
</protein>
<sequence length="963" mass="108318">MAEGGGCRERPDAETQKSELGALMRTTLQRGAQWYLIDSRWFKQWKKYVGFGSWDMYNVGEHNLFPGPIDNSGLFSDPESQTLKEHLIDELDYVLVPTEAWNKLLNWYGCVEGQQPIVRKVVEHGLFVKHCKVEVYLLELKLCENSDPTNVLSCHFSKADTIATIEKEMRKLFNIPAEREARLWNKYMSNTYEQLSKLDNTVQDAGLYLGQVLVIEPQNEDGTWPRQTLQSKSSTAPSRNFTTSPKSSASPYSSVSDSLIANGDSTSTCGMHSSGVSRGGSGFSASYNCQEPPSSHIQPGLCGLGNLGNTCFMNSALQCLSNTAPLTDYFLKDEYEAEINRDNPLGMKGEIAEAYAELIKQMWSGRDAHVAPRMFKTQVGRFAPQFSGYQQQDSQELLAFLLDGLHEDLNRVKKKPYLELKDANGRPDVVVAKEAWENHRLRNDSVIVDTFHGLFKSTLVCPECAKVSVTFDPFCYLTLPLPLKKDRVMEVFLVPADPHCRPTQYRVTVPLMGAVSDLCEALSRLSGIAAENMVVADVYNHRFHKIFQMDEGLNHIMPRDDIFVYEVCSTSVDGSECVTLPVYFRERKSRPSSTSSASALYGQPLLLSVPKHKLTLESLYQAVCDRISRYVKQPLPDEFGSSPLEPGACNGSRNSCEGEDEEEMEHQEEGKEQLSETEGSGEDEPGSDPSETTQKKIKGQPCPKRLFTFSLVNSYGTADINSLAADGKLLKLNSRSTLAMDWDSETRSLYYDEQESEAYEKHVSMLQPQKKKKTTVALRDCIELFTTMETLGEHDPWYCPNCKKHQQATKKSDLWSLPKILVVHLKRFSYNRYWRDKLDTVVEFPIRGLNMSEFVCNLSARPYVYDLIAVSNHYGAMGVGHYTAYAKNKLNGKWYYFDDSNVSLASEDQIVTKAAYVLFYQRRDDEFYKTPSLSSSGSSDGGTRPSSSQQGLGDDEACSMDTN</sequence>
<gene>
    <name type="primary">USP4</name>
</gene>
<dbReference type="EC" id="3.4.19.12" evidence="3"/>
<dbReference type="EMBL" id="CR858339">
    <property type="protein sequence ID" value="CAH90574.1"/>
    <property type="molecule type" value="mRNA"/>
</dbReference>
<dbReference type="RefSeq" id="NP_001125307.1">
    <property type="nucleotide sequence ID" value="NM_001131835.1"/>
</dbReference>
<dbReference type="SMR" id="Q5RCD3"/>
<dbReference type="FunCoup" id="Q5RCD3">
    <property type="interactions" value="4163"/>
</dbReference>
<dbReference type="STRING" id="9601.ENSPPYP00000015523"/>
<dbReference type="MEROPS" id="C19.010"/>
<dbReference type="GeneID" id="100172206"/>
<dbReference type="KEGG" id="pon:100172206"/>
<dbReference type="CTD" id="7375"/>
<dbReference type="eggNOG" id="KOG1870">
    <property type="taxonomic scope" value="Eukaryota"/>
</dbReference>
<dbReference type="InParanoid" id="Q5RCD3"/>
<dbReference type="OrthoDB" id="265776at2759"/>
<dbReference type="Proteomes" id="UP000001595">
    <property type="component" value="Unplaced"/>
</dbReference>
<dbReference type="GO" id="GO:0005737">
    <property type="term" value="C:cytoplasm"/>
    <property type="evidence" value="ECO:0000250"/>
    <property type="project" value="UniProtKB"/>
</dbReference>
<dbReference type="GO" id="GO:0005634">
    <property type="term" value="C:nucleus"/>
    <property type="evidence" value="ECO:0000250"/>
    <property type="project" value="UniProtKB"/>
</dbReference>
<dbReference type="GO" id="GO:0004843">
    <property type="term" value="F:cysteine-type deubiquitinase activity"/>
    <property type="evidence" value="ECO:0000250"/>
    <property type="project" value="UniProtKB"/>
</dbReference>
<dbReference type="GO" id="GO:0046872">
    <property type="term" value="F:metal ion binding"/>
    <property type="evidence" value="ECO:0007669"/>
    <property type="project" value="UniProtKB-KW"/>
</dbReference>
<dbReference type="GO" id="GO:0031397">
    <property type="term" value="P:negative regulation of protein ubiquitination"/>
    <property type="evidence" value="ECO:0000250"/>
    <property type="project" value="UniProtKB"/>
</dbReference>
<dbReference type="GO" id="GO:1904263">
    <property type="term" value="P:positive regulation of TORC1 signaling"/>
    <property type="evidence" value="ECO:0000250"/>
    <property type="project" value="UniProtKB"/>
</dbReference>
<dbReference type="GO" id="GO:0016579">
    <property type="term" value="P:protein deubiquitination"/>
    <property type="evidence" value="ECO:0000250"/>
    <property type="project" value="UniProtKB"/>
</dbReference>
<dbReference type="GO" id="GO:0034394">
    <property type="term" value="P:protein localization to cell surface"/>
    <property type="evidence" value="ECO:0000250"/>
    <property type="project" value="UniProtKB"/>
</dbReference>
<dbReference type="GO" id="GO:0006508">
    <property type="term" value="P:proteolysis"/>
    <property type="evidence" value="ECO:0007669"/>
    <property type="project" value="UniProtKB-KW"/>
</dbReference>
<dbReference type="GO" id="GO:0031647">
    <property type="term" value="P:regulation of protein stability"/>
    <property type="evidence" value="ECO:0000250"/>
    <property type="project" value="UniProtKB"/>
</dbReference>
<dbReference type="GO" id="GO:0000244">
    <property type="term" value="P:spliceosomal tri-snRNP complex assembly"/>
    <property type="evidence" value="ECO:0000250"/>
    <property type="project" value="UniProtKB"/>
</dbReference>
<dbReference type="CDD" id="cd02674">
    <property type="entry name" value="Peptidase_C19R"/>
    <property type="match status" value="1"/>
</dbReference>
<dbReference type="FunFam" id="3.30.2230.10:FF:000003">
    <property type="entry name" value="ubiquitin carboxyl-terminal hydrolase 15 isoform X1"/>
    <property type="match status" value="1"/>
</dbReference>
<dbReference type="FunFam" id="3.90.70.10:FF:000013">
    <property type="entry name" value="ubiquitin carboxyl-terminal hydrolase 15 isoform X1"/>
    <property type="match status" value="1"/>
</dbReference>
<dbReference type="FunFam" id="3.10.20.90:FF:000020">
    <property type="entry name" value="ubiquitin carboxyl-terminal hydrolase 15 isoform X2"/>
    <property type="match status" value="1"/>
</dbReference>
<dbReference type="FunFam" id="3.90.70.10:FF:000047">
    <property type="entry name" value="ubiquitin carboxyl-terminal hydrolase 4 isoform X2"/>
    <property type="match status" value="1"/>
</dbReference>
<dbReference type="Gene3D" id="3.90.70.10">
    <property type="entry name" value="Cysteine proteinases"/>
    <property type="match status" value="2"/>
</dbReference>
<dbReference type="Gene3D" id="3.30.2230.10">
    <property type="entry name" value="DUSP-like"/>
    <property type="match status" value="1"/>
</dbReference>
<dbReference type="Gene3D" id="3.10.20.90">
    <property type="entry name" value="Phosphatidylinositol 3-kinase Catalytic Subunit, Chain A, domain 1"/>
    <property type="match status" value="1"/>
</dbReference>
<dbReference type="InterPro" id="IPR035927">
    <property type="entry name" value="DUSP-like_sf"/>
</dbReference>
<dbReference type="InterPro" id="IPR038765">
    <property type="entry name" value="Papain-like_cys_pep_sf"/>
</dbReference>
<dbReference type="InterPro" id="IPR006615">
    <property type="entry name" value="Pept_C19_DUSP"/>
</dbReference>
<dbReference type="InterPro" id="IPR001394">
    <property type="entry name" value="Peptidase_C19_UCH"/>
</dbReference>
<dbReference type="InterPro" id="IPR050185">
    <property type="entry name" value="Ub_carboxyl-term_hydrolase"/>
</dbReference>
<dbReference type="InterPro" id="IPR028135">
    <property type="entry name" value="Ub_USP-typ"/>
</dbReference>
<dbReference type="InterPro" id="IPR018200">
    <property type="entry name" value="USP_CS"/>
</dbReference>
<dbReference type="InterPro" id="IPR028889">
    <property type="entry name" value="USP_dom"/>
</dbReference>
<dbReference type="PANTHER" id="PTHR21646">
    <property type="entry name" value="UBIQUITIN CARBOXYL-TERMINAL HYDROLASE"/>
    <property type="match status" value="1"/>
</dbReference>
<dbReference type="PANTHER" id="PTHR21646:SF45">
    <property type="entry name" value="UBIQUITIN CARBOXYL-TERMINAL HYDROLASE 4"/>
    <property type="match status" value="1"/>
</dbReference>
<dbReference type="Pfam" id="PF06337">
    <property type="entry name" value="DUSP"/>
    <property type="match status" value="1"/>
</dbReference>
<dbReference type="Pfam" id="PF14836">
    <property type="entry name" value="Ubiquitin_3"/>
    <property type="match status" value="1"/>
</dbReference>
<dbReference type="Pfam" id="PF00443">
    <property type="entry name" value="UCH"/>
    <property type="match status" value="1"/>
</dbReference>
<dbReference type="SMART" id="SM00695">
    <property type="entry name" value="DUSP"/>
    <property type="match status" value="1"/>
</dbReference>
<dbReference type="SUPFAM" id="SSF54001">
    <property type="entry name" value="Cysteine proteinases"/>
    <property type="match status" value="1"/>
</dbReference>
<dbReference type="SUPFAM" id="SSF143791">
    <property type="entry name" value="DUSP-like"/>
    <property type="match status" value="1"/>
</dbReference>
<dbReference type="PROSITE" id="PS51283">
    <property type="entry name" value="DUSP"/>
    <property type="match status" value="1"/>
</dbReference>
<dbReference type="PROSITE" id="PS00972">
    <property type="entry name" value="USP_1"/>
    <property type="match status" value="1"/>
</dbReference>
<dbReference type="PROSITE" id="PS00973">
    <property type="entry name" value="USP_2"/>
    <property type="match status" value="1"/>
</dbReference>
<dbReference type="PROSITE" id="PS50235">
    <property type="entry name" value="USP_3"/>
    <property type="match status" value="1"/>
</dbReference>
<evidence type="ECO:0000250" key="1">
    <source>
        <dbReference type="UniProtKB" id="B2GUZ1"/>
    </source>
</evidence>
<evidence type="ECO:0000250" key="2">
    <source>
        <dbReference type="UniProtKB" id="P35123"/>
    </source>
</evidence>
<evidence type="ECO:0000250" key="3">
    <source>
        <dbReference type="UniProtKB" id="Q13107"/>
    </source>
</evidence>
<evidence type="ECO:0000255" key="4"/>
<evidence type="ECO:0000255" key="5">
    <source>
        <dbReference type="PROSITE-ProRule" id="PRU00613"/>
    </source>
</evidence>
<evidence type="ECO:0000255" key="6">
    <source>
        <dbReference type="PROSITE-ProRule" id="PRU01035"/>
    </source>
</evidence>
<evidence type="ECO:0000256" key="7">
    <source>
        <dbReference type="SAM" id="MobiDB-lite"/>
    </source>
</evidence>
<evidence type="ECO:0000305" key="8"/>